<comment type="similarity">
    <text evidence="1">Belongs to the UPF0212 family.</text>
</comment>
<gene>
    <name type="ordered locus">AF_0282</name>
</gene>
<evidence type="ECO:0000255" key="1">
    <source>
        <dbReference type="HAMAP-Rule" id="MF_01223"/>
    </source>
</evidence>
<accession>O29959</accession>
<proteinExistence type="inferred from homology"/>
<organism>
    <name type="scientific">Archaeoglobus fulgidus (strain ATCC 49558 / DSM 4304 / JCM 9628 / NBRC 100126 / VC-16)</name>
    <dbReference type="NCBI Taxonomy" id="224325"/>
    <lineage>
        <taxon>Archaea</taxon>
        <taxon>Methanobacteriati</taxon>
        <taxon>Methanobacteriota</taxon>
        <taxon>Archaeoglobi</taxon>
        <taxon>Archaeoglobales</taxon>
        <taxon>Archaeoglobaceae</taxon>
        <taxon>Archaeoglobus</taxon>
    </lineage>
</organism>
<protein>
    <recommendedName>
        <fullName evidence="1">UPF0212 protein AF_0282</fullName>
    </recommendedName>
</protein>
<sequence length="113" mass="12367">MPDYLVVLQAAWIVRKARSVEDAMNIAVAEAGKKLNPDLDFVKIDVGDTACPKCNSPLKAVFMVAGVALVGLIFEMKVFNAKSPEHAAKIAKYEIGKRMPRIPLEVIEVAEIE</sequence>
<reference key="1">
    <citation type="journal article" date="1997" name="Nature">
        <title>The complete genome sequence of the hyperthermophilic, sulphate-reducing archaeon Archaeoglobus fulgidus.</title>
        <authorList>
            <person name="Klenk H.-P."/>
            <person name="Clayton R.A."/>
            <person name="Tomb J.-F."/>
            <person name="White O."/>
            <person name="Nelson K.E."/>
            <person name="Ketchum K.A."/>
            <person name="Dodson R.J."/>
            <person name="Gwinn M.L."/>
            <person name="Hickey E.K."/>
            <person name="Peterson J.D."/>
            <person name="Richardson D.L."/>
            <person name="Kerlavage A.R."/>
            <person name="Graham D.E."/>
            <person name="Kyrpides N.C."/>
            <person name="Fleischmann R.D."/>
            <person name="Quackenbush J."/>
            <person name="Lee N.H."/>
            <person name="Sutton G.G."/>
            <person name="Gill S.R."/>
            <person name="Kirkness E.F."/>
            <person name="Dougherty B.A."/>
            <person name="McKenney K."/>
            <person name="Adams M.D."/>
            <person name="Loftus B.J."/>
            <person name="Peterson S.N."/>
            <person name="Reich C.I."/>
            <person name="McNeil L.K."/>
            <person name="Badger J.H."/>
            <person name="Glodek A."/>
            <person name="Zhou L."/>
            <person name="Overbeek R."/>
            <person name="Gocayne J.D."/>
            <person name="Weidman J.F."/>
            <person name="McDonald L.A."/>
            <person name="Utterback T.R."/>
            <person name="Cotton M.D."/>
            <person name="Spriggs T."/>
            <person name="Artiach P."/>
            <person name="Kaine B.P."/>
            <person name="Sykes S.M."/>
            <person name="Sadow P.W."/>
            <person name="D'Andrea K.P."/>
            <person name="Bowman C."/>
            <person name="Fujii C."/>
            <person name="Garland S.A."/>
            <person name="Mason T.M."/>
            <person name="Olsen G.J."/>
            <person name="Fraser C.M."/>
            <person name="Smith H.O."/>
            <person name="Woese C.R."/>
            <person name="Venter J.C."/>
        </authorList>
    </citation>
    <scope>NUCLEOTIDE SEQUENCE [LARGE SCALE GENOMIC DNA]</scope>
    <source>
        <strain>ATCC 49558 / DSM 4304 / JCM 9628 / NBRC 100126 / VC-16</strain>
    </source>
</reference>
<keyword id="KW-1185">Reference proteome</keyword>
<feature type="chain" id="PRO_0000068270" description="UPF0212 protein AF_0282">
    <location>
        <begin position="1"/>
        <end position="113"/>
    </location>
</feature>
<name>Y282_ARCFU</name>
<dbReference type="EMBL" id="AE000782">
    <property type="protein sequence ID" value="AAB90951.1"/>
    <property type="molecule type" value="Genomic_DNA"/>
</dbReference>
<dbReference type="PIR" id="B69285">
    <property type="entry name" value="B69285"/>
</dbReference>
<dbReference type="RefSeq" id="WP_010877793.1">
    <property type="nucleotide sequence ID" value="NC_000917.1"/>
</dbReference>
<dbReference type="STRING" id="224325.AF_0282"/>
<dbReference type="PaxDb" id="224325-AF_0282"/>
<dbReference type="EnsemblBacteria" id="AAB90951">
    <property type="protein sequence ID" value="AAB90951"/>
    <property type="gene ID" value="AF_0282"/>
</dbReference>
<dbReference type="KEGG" id="afu:AF_0282"/>
<dbReference type="eggNOG" id="arCOG02119">
    <property type="taxonomic scope" value="Archaea"/>
</dbReference>
<dbReference type="HOGENOM" id="CLU_138334_0_0_2"/>
<dbReference type="OrthoDB" id="63517at2157"/>
<dbReference type="PhylomeDB" id="O29959"/>
<dbReference type="Proteomes" id="UP000002199">
    <property type="component" value="Chromosome"/>
</dbReference>
<dbReference type="HAMAP" id="MF_01223">
    <property type="entry name" value="UPF0212"/>
    <property type="match status" value="1"/>
</dbReference>
<dbReference type="InterPro" id="IPR007564">
    <property type="entry name" value="UPF0212"/>
</dbReference>
<dbReference type="NCBIfam" id="NF003035">
    <property type="entry name" value="PRK03922.1"/>
    <property type="match status" value="1"/>
</dbReference>
<dbReference type="PANTHER" id="PTHR42199">
    <property type="entry name" value="UPF0212 PROTEIN MJ0068"/>
    <property type="match status" value="1"/>
</dbReference>
<dbReference type="PANTHER" id="PTHR42199:SF1">
    <property type="entry name" value="UPF0212 PROTEIN TK1194"/>
    <property type="match status" value="1"/>
</dbReference>
<dbReference type="Pfam" id="PF04475">
    <property type="entry name" value="DUF555"/>
    <property type="match status" value="1"/>
</dbReference>
<dbReference type="PIRSF" id="PIRSF016934">
    <property type="entry name" value="UCP016934"/>
    <property type="match status" value="1"/>
</dbReference>